<protein>
    <recommendedName>
        <fullName evidence="1">Lipoyl synthase</fullName>
        <ecNumber evidence="1">2.8.1.8</ecNumber>
    </recommendedName>
    <alternativeName>
        <fullName evidence="1">Lip-syn</fullName>
        <shortName evidence="1">LS</shortName>
    </alternativeName>
    <alternativeName>
        <fullName evidence="1">Lipoate synthase</fullName>
    </alternativeName>
    <alternativeName>
        <fullName evidence="1">Lipoic acid synthase</fullName>
    </alternativeName>
    <alternativeName>
        <fullName evidence="1">Sulfur insertion protein LipA</fullName>
    </alternativeName>
</protein>
<name>LIPA_TOLAT</name>
<organism>
    <name type="scientific">Tolumonas auensis (strain DSM 9187 / NBRC 110442 / TA 4)</name>
    <dbReference type="NCBI Taxonomy" id="595494"/>
    <lineage>
        <taxon>Bacteria</taxon>
        <taxon>Pseudomonadati</taxon>
        <taxon>Pseudomonadota</taxon>
        <taxon>Gammaproteobacteria</taxon>
        <taxon>Aeromonadales</taxon>
        <taxon>Aeromonadaceae</taxon>
        <taxon>Tolumonas</taxon>
    </lineage>
</organism>
<evidence type="ECO:0000255" key="1">
    <source>
        <dbReference type="HAMAP-Rule" id="MF_00206"/>
    </source>
</evidence>
<evidence type="ECO:0000255" key="2">
    <source>
        <dbReference type="PROSITE-ProRule" id="PRU01266"/>
    </source>
</evidence>
<reference key="1">
    <citation type="submission" date="2009-05" db="EMBL/GenBank/DDBJ databases">
        <title>Complete sequence of Tolumonas auensis DSM 9187.</title>
        <authorList>
            <consortium name="US DOE Joint Genome Institute"/>
            <person name="Lucas S."/>
            <person name="Copeland A."/>
            <person name="Lapidus A."/>
            <person name="Glavina del Rio T."/>
            <person name="Tice H."/>
            <person name="Bruce D."/>
            <person name="Goodwin L."/>
            <person name="Pitluck S."/>
            <person name="Chertkov O."/>
            <person name="Brettin T."/>
            <person name="Detter J.C."/>
            <person name="Han C."/>
            <person name="Larimer F."/>
            <person name="Land M."/>
            <person name="Hauser L."/>
            <person name="Kyrpides N."/>
            <person name="Mikhailova N."/>
            <person name="Spring S."/>
            <person name="Beller H."/>
        </authorList>
    </citation>
    <scope>NUCLEOTIDE SEQUENCE [LARGE SCALE GENOMIC DNA]</scope>
    <source>
        <strain>DSM 9187 / NBRC 110442 / TA 4</strain>
    </source>
</reference>
<dbReference type="EC" id="2.8.1.8" evidence="1"/>
<dbReference type="EMBL" id="CP001616">
    <property type="protein sequence ID" value="ACQ94429.1"/>
    <property type="molecule type" value="Genomic_DNA"/>
</dbReference>
<dbReference type="RefSeq" id="WP_015879878.1">
    <property type="nucleotide sequence ID" value="NC_012691.1"/>
</dbReference>
<dbReference type="SMR" id="C4LCC5"/>
<dbReference type="STRING" id="595494.Tola_2836"/>
<dbReference type="KEGG" id="tau:Tola_2836"/>
<dbReference type="eggNOG" id="COG0320">
    <property type="taxonomic scope" value="Bacteria"/>
</dbReference>
<dbReference type="HOGENOM" id="CLU_033144_2_1_6"/>
<dbReference type="OrthoDB" id="9787898at2"/>
<dbReference type="UniPathway" id="UPA00538">
    <property type="reaction ID" value="UER00593"/>
</dbReference>
<dbReference type="Proteomes" id="UP000009073">
    <property type="component" value="Chromosome"/>
</dbReference>
<dbReference type="GO" id="GO:0005737">
    <property type="term" value="C:cytoplasm"/>
    <property type="evidence" value="ECO:0007669"/>
    <property type="project" value="UniProtKB-SubCell"/>
</dbReference>
<dbReference type="GO" id="GO:0051539">
    <property type="term" value="F:4 iron, 4 sulfur cluster binding"/>
    <property type="evidence" value="ECO:0007669"/>
    <property type="project" value="UniProtKB-UniRule"/>
</dbReference>
<dbReference type="GO" id="GO:0016992">
    <property type="term" value="F:lipoate synthase activity"/>
    <property type="evidence" value="ECO:0007669"/>
    <property type="project" value="UniProtKB-UniRule"/>
</dbReference>
<dbReference type="GO" id="GO:0046872">
    <property type="term" value="F:metal ion binding"/>
    <property type="evidence" value="ECO:0007669"/>
    <property type="project" value="UniProtKB-KW"/>
</dbReference>
<dbReference type="CDD" id="cd01335">
    <property type="entry name" value="Radical_SAM"/>
    <property type="match status" value="1"/>
</dbReference>
<dbReference type="FunFam" id="3.20.20.70:FF:000023">
    <property type="entry name" value="Lipoyl synthase"/>
    <property type="match status" value="1"/>
</dbReference>
<dbReference type="Gene3D" id="3.20.20.70">
    <property type="entry name" value="Aldolase class I"/>
    <property type="match status" value="1"/>
</dbReference>
<dbReference type="HAMAP" id="MF_00206">
    <property type="entry name" value="Lipoyl_synth"/>
    <property type="match status" value="1"/>
</dbReference>
<dbReference type="InterPro" id="IPR013785">
    <property type="entry name" value="Aldolase_TIM"/>
</dbReference>
<dbReference type="InterPro" id="IPR006638">
    <property type="entry name" value="Elp3/MiaA/NifB-like_rSAM"/>
</dbReference>
<dbReference type="InterPro" id="IPR031691">
    <property type="entry name" value="LIAS_N"/>
</dbReference>
<dbReference type="InterPro" id="IPR003698">
    <property type="entry name" value="Lipoyl_synth"/>
</dbReference>
<dbReference type="InterPro" id="IPR007197">
    <property type="entry name" value="rSAM"/>
</dbReference>
<dbReference type="NCBIfam" id="TIGR00510">
    <property type="entry name" value="lipA"/>
    <property type="match status" value="1"/>
</dbReference>
<dbReference type="NCBIfam" id="NF004019">
    <property type="entry name" value="PRK05481.1"/>
    <property type="match status" value="1"/>
</dbReference>
<dbReference type="NCBIfam" id="NF009544">
    <property type="entry name" value="PRK12928.1"/>
    <property type="match status" value="1"/>
</dbReference>
<dbReference type="PANTHER" id="PTHR10949">
    <property type="entry name" value="LIPOYL SYNTHASE"/>
    <property type="match status" value="1"/>
</dbReference>
<dbReference type="PANTHER" id="PTHR10949:SF0">
    <property type="entry name" value="LIPOYL SYNTHASE, MITOCHONDRIAL"/>
    <property type="match status" value="1"/>
</dbReference>
<dbReference type="Pfam" id="PF16881">
    <property type="entry name" value="LIAS_N"/>
    <property type="match status" value="1"/>
</dbReference>
<dbReference type="Pfam" id="PF04055">
    <property type="entry name" value="Radical_SAM"/>
    <property type="match status" value="1"/>
</dbReference>
<dbReference type="PIRSF" id="PIRSF005963">
    <property type="entry name" value="Lipoyl_synth"/>
    <property type="match status" value="1"/>
</dbReference>
<dbReference type="SFLD" id="SFLDF00271">
    <property type="entry name" value="lipoyl_synthase"/>
    <property type="match status" value="1"/>
</dbReference>
<dbReference type="SFLD" id="SFLDS00029">
    <property type="entry name" value="Radical_SAM"/>
    <property type="match status" value="1"/>
</dbReference>
<dbReference type="SMART" id="SM00729">
    <property type="entry name" value="Elp3"/>
    <property type="match status" value="1"/>
</dbReference>
<dbReference type="SUPFAM" id="SSF102114">
    <property type="entry name" value="Radical SAM enzymes"/>
    <property type="match status" value="1"/>
</dbReference>
<dbReference type="PROSITE" id="PS51918">
    <property type="entry name" value="RADICAL_SAM"/>
    <property type="match status" value="1"/>
</dbReference>
<gene>
    <name evidence="1" type="primary">lipA</name>
    <name type="ordered locus">Tola_2836</name>
</gene>
<comment type="function">
    <text evidence="1">Catalyzes the radical-mediated insertion of two sulfur atoms into the C-6 and C-8 positions of the octanoyl moiety bound to the lipoyl domains of lipoate-dependent enzymes, thereby converting the octanoylated domains into lipoylated derivatives.</text>
</comment>
<comment type="catalytic activity">
    <reaction evidence="1">
        <text>[[Fe-S] cluster scaffold protein carrying a second [4Fe-4S](2+) cluster] + N(6)-octanoyl-L-lysyl-[protein] + 2 oxidized [2Fe-2S]-[ferredoxin] + 2 S-adenosyl-L-methionine + 4 H(+) = [[Fe-S] cluster scaffold protein] + N(6)-[(R)-dihydrolipoyl]-L-lysyl-[protein] + 4 Fe(3+) + 2 hydrogen sulfide + 2 5'-deoxyadenosine + 2 L-methionine + 2 reduced [2Fe-2S]-[ferredoxin]</text>
        <dbReference type="Rhea" id="RHEA:16585"/>
        <dbReference type="Rhea" id="RHEA-COMP:9928"/>
        <dbReference type="Rhea" id="RHEA-COMP:10000"/>
        <dbReference type="Rhea" id="RHEA-COMP:10001"/>
        <dbReference type="Rhea" id="RHEA-COMP:10475"/>
        <dbReference type="Rhea" id="RHEA-COMP:14568"/>
        <dbReference type="Rhea" id="RHEA-COMP:14569"/>
        <dbReference type="ChEBI" id="CHEBI:15378"/>
        <dbReference type="ChEBI" id="CHEBI:17319"/>
        <dbReference type="ChEBI" id="CHEBI:29034"/>
        <dbReference type="ChEBI" id="CHEBI:29919"/>
        <dbReference type="ChEBI" id="CHEBI:33722"/>
        <dbReference type="ChEBI" id="CHEBI:33737"/>
        <dbReference type="ChEBI" id="CHEBI:33738"/>
        <dbReference type="ChEBI" id="CHEBI:57844"/>
        <dbReference type="ChEBI" id="CHEBI:59789"/>
        <dbReference type="ChEBI" id="CHEBI:78809"/>
        <dbReference type="ChEBI" id="CHEBI:83100"/>
        <dbReference type="EC" id="2.8.1.8"/>
    </reaction>
</comment>
<comment type="cofactor">
    <cofactor evidence="1">
        <name>[4Fe-4S] cluster</name>
        <dbReference type="ChEBI" id="CHEBI:49883"/>
    </cofactor>
    <text evidence="1">Binds 2 [4Fe-4S] clusters per subunit. One cluster is coordinated with 3 cysteines and an exchangeable S-adenosyl-L-methionine.</text>
</comment>
<comment type="pathway">
    <text evidence="1">Protein modification; protein lipoylation via endogenous pathway; protein N(6)-(lipoyl)lysine from octanoyl-[acyl-carrier-protein]: step 2/2.</text>
</comment>
<comment type="subcellular location">
    <subcellularLocation>
        <location evidence="1">Cytoplasm</location>
    </subcellularLocation>
</comment>
<comment type="similarity">
    <text evidence="1">Belongs to the radical SAM superfamily. Lipoyl synthase family.</text>
</comment>
<feature type="chain" id="PRO_1000204158" description="Lipoyl synthase">
    <location>
        <begin position="1"/>
        <end position="321"/>
    </location>
</feature>
<feature type="domain" description="Radical SAM core" evidence="2">
    <location>
        <begin position="80"/>
        <end position="297"/>
    </location>
</feature>
<feature type="binding site" evidence="1">
    <location>
        <position position="68"/>
    </location>
    <ligand>
        <name>[4Fe-4S] cluster</name>
        <dbReference type="ChEBI" id="CHEBI:49883"/>
        <label>1</label>
    </ligand>
</feature>
<feature type="binding site" evidence="1">
    <location>
        <position position="73"/>
    </location>
    <ligand>
        <name>[4Fe-4S] cluster</name>
        <dbReference type="ChEBI" id="CHEBI:49883"/>
        <label>1</label>
    </ligand>
</feature>
<feature type="binding site" evidence="1">
    <location>
        <position position="79"/>
    </location>
    <ligand>
        <name>[4Fe-4S] cluster</name>
        <dbReference type="ChEBI" id="CHEBI:49883"/>
        <label>1</label>
    </ligand>
</feature>
<feature type="binding site" evidence="1">
    <location>
        <position position="94"/>
    </location>
    <ligand>
        <name>[4Fe-4S] cluster</name>
        <dbReference type="ChEBI" id="CHEBI:49883"/>
        <label>2</label>
        <note>4Fe-4S-S-AdoMet</note>
    </ligand>
</feature>
<feature type="binding site" evidence="1">
    <location>
        <position position="98"/>
    </location>
    <ligand>
        <name>[4Fe-4S] cluster</name>
        <dbReference type="ChEBI" id="CHEBI:49883"/>
        <label>2</label>
        <note>4Fe-4S-S-AdoMet</note>
    </ligand>
</feature>
<feature type="binding site" evidence="1">
    <location>
        <position position="101"/>
    </location>
    <ligand>
        <name>[4Fe-4S] cluster</name>
        <dbReference type="ChEBI" id="CHEBI:49883"/>
        <label>2</label>
        <note>4Fe-4S-S-AdoMet</note>
    </ligand>
</feature>
<feature type="binding site" evidence="1">
    <location>
        <position position="308"/>
    </location>
    <ligand>
        <name>[4Fe-4S] cluster</name>
        <dbReference type="ChEBI" id="CHEBI:49883"/>
        <label>1</label>
    </ligand>
</feature>
<accession>C4LCC5</accession>
<proteinExistence type="inferred from homology"/>
<sequence>MTKPITVQPGVQLRDADKMALIPVKFLPEQEGEQLKKPDWMRIRLPKTDEKIQNVKNIMRKNNLHSVCEEASCPNLSECFNHGTATFMILGAICTRHCPFCDVAHGKPLAPDADEPKKLANTIREMALKYVVITSVDRDDLRDGGAQHFADCIREIRLASPNTRIETLTPDFRGRMDKALDVFRETPPDVFNHNLETAPRLYSMARPGADYAWSLKLLQKMKELHPDLPTKSGLMMGLGETNDEIVQVLKDLRAHGVTMLTLGQYLQPSRHHLPVKRYVPPQEFDELKAIALDLGFTHAACGPFVRSSYHADLQAQGQEVK</sequence>
<keyword id="KW-0004">4Fe-4S</keyword>
<keyword id="KW-0963">Cytoplasm</keyword>
<keyword id="KW-0408">Iron</keyword>
<keyword id="KW-0411">Iron-sulfur</keyword>
<keyword id="KW-0479">Metal-binding</keyword>
<keyword id="KW-1185">Reference proteome</keyword>
<keyword id="KW-0949">S-adenosyl-L-methionine</keyword>
<keyword id="KW-0808">Transferase</keyword>